<comment type="function">
    <text evidence="1">Extracellular aminopeptidase that allows assimilation of proteinaceous substrates.</text>
</comment>
<comment type="cofactor">
    <cofactor evidence="1">
        <name>Zn(2+)</name>
        <dbReference type="ChEBI" id="CHEBI:29105"/>
    </cofactor>
    <text evidence="1">Binds 2 Zn(2+) ions per subunit.</text>
</comment>
<comment type="subunit">
    <text evidence="1">Monomer.</text>
</comment>
<comment type="subcellular location">
    <subcellularLocation>
        <location evidence="1">Secreted</location>
    </subcellularLocation>
</comment>
<comment type="similarity">
    <text evidence="3">Belongs to the peptidase M28 family. M28E subfamily.</text>
</comment>
<evidence type="ECO:0000250" key="1"/>
<evidence type="ECO:0000255" key="2"/>
<evidence type="ECO:0000305" key="3"/>
<organism>
    <name type="scientific">Aspergillus clavatus (strain ATCC 1007 / CBS 513.65 / DSM 816 / NCTC 3887 / NRRL 1 / QM 1276 / 107)</name>
    <dbReference type="NCBI Taxonomy" id="344612"/>
    <lineage>
        <taxon>Eukaryota</taxon>
        <taxon>Fungi</taxon>
        <taxon>Dikarya</taxon>
        <taxon>Ascomycota</taxon>
        <taxon>Pezizomycotina</taxon>
        <taxon>Eurotiomycetes</taxon>
        <taxon>Eurotiomycetidae</taxon>
        <taxon>Eurotiales</taxon>
        <taxon>Aspergillaceae</taxon>
        <taxon>Aspergillus</taxon>
        <taxon>Aspergillus subgen. Fumigati</taxon>
    </lineage>
</organism>
<gene>
    <name type="primary">lap1</name>
    <name type="ORF">ACLA_054190</name>
</gene>
<keyword id="KW-0031">Aminopeptidase</keyword>
<keyword id="KW-1015">Disulfide bond</keyword>
<keyword id="KW-0325">Glycoprotein</keyword>
<keyword id="KW-0378">Hydrolase</keyword>
<keyword id="KW-0479">Metal-binding</keyword>
<keyword id="KW-0645">Protease</keyword>
<keyword id="KW-1185">Reference proteome</keyword>
<keyword id="KW-0964">Secreted</keyword>
<keyword id="KW-0732">Signal</keyword>
<keyword id="KW-0862">Zinc</keyword>
<keyword id="KW-0865">Zymogen</keyword>
<accession>A1C948</accession>
<reference key="1">
    <citation type="journal article" date="2008" name="PLoS Genet.">
        <title>Genomic islands in the pathogenic filamentous fungus Aspergillus fumigatus.</title>
        <authorList>
            <person name="Fedorova N.D."/>
            <person name="Khaldi N."/>
            <person name="Joardar V.S."/>
            <person name="Maiti R."/>
            <person name="Amedeo P."/>
            <person name="Anderson M.J."/>
            <person name="Crabtree J."/>
            <person name="Silva J.C."/>
            <person name="Badger J.H."/>
            <person name="Albarraq A."/>
            <person name="Angiuoli S."/>
            <person name="Bussey H."/>
            <person name="Bowyer P."/>
            <person name="Cotty P.J."/>
            <person name="Dyer P.S."/>
            <person name="Egan A."/>
            <person name="Galens K."/>
            <person name="Fraser-Liggett C.M."/>
            <person name="Haas B.J."/>
            <person name="Inman J.M."/>
            <person name="Kent R."/>
            <person name="Lemieux S."/>
            <person name="Malavazi I."/>
            <person name="Orvis J."/>
            <person name="Roemer T."/>
            <person name="Ronning C.M."/>
            <person name="Sundaram J.P."/>
            <person name="Sutton G."/>
            <person name="Turner G."/>
            <person name="Venter J.C."/>
            <person name="White O.R."/>
            <person name="Whitty B.R."/>
            <person name="Youngman P."/>
            <person name="Wolfe K.H."/>
            <person name="Goldman G.H."/>
            <person name="Wortman J.R."/>
            <person name="Jiang B."/>
            <person name="Denning D.W."/>
            <person name="Nierman W.C."/>
        </authorList>
    </citation>
    <scope>NUCLEOTIDE SEQUENCE [LARGE SCALE GENOMIC DNA]</scope>
    <source>
        <strain>ATCC 1007 / CBS 513.65 / DSM 816 / NCTC 3887 / NRRL 1 / QM 1276 / 107</strain>
    </source>
</reference>
<protein>
    <recommendedName>
        <fullName>Leucine aminopeptidase 1</fullName>
        <ecNumber>3.4.11.-</ecNumber>
    </recommendedName>
    <alternativeName>
        <fullName>Leucyl aminopeptidase 1</fullName>
        <shortName>LAP1</shortName>
    </alternativeName>
</protein>
<dbReference type="EC" id="3.4.11.-"/>
<dbReference type="EMBL" id="DS027048">
    <property type="protein sequence ID" value="EAW13372.1"/>
    <property type="molecule type" value="Genomic_DNA"/>
</dbReference>
<dbReference type="RefSeq" id="XP_001274798.1">
    <property type="nucleotide sequence ID" value="XM_001274797.1"/>
</dbReference>
<dbReference type="SMR" id="A1C948"/>
<dbReference type="STRING" id="344612.A1C948"/>
<dbReference type="MEROPS" id="M28.022"/>
<dbReference type="GlyCosmos" id="A1C948">
    <property type="glycosylation" value="3 sites, No reported glycans"/>
</dbReference>
<dbReference type="EnsemblFungi" id="EAW13372">
    <property type="protein sequence ID" value="EAW13372"/>
    <property type="gene ID" value="ACLA_054190"/>
</dbReference>
<dbReference type="GeneID" id="4706960"/>
<dbReference type="KEGG" id="act:ACLA_054190"/>
<dbReference type="VEuPathDB" id="FungiDB:ACLA_054190"/>
<dbReference type="eggNOG" id="KOG2195">
    <property type="taxonomic scope" value="Eukaryota"/>
</dbReference>
<dbReference type="HOGENOM" id="CLU_025866_0_0_1"/>
<dbReference type="OMA" id="GMLQQDM"/>
<dbReference type="OrthoDB" id="2214at2759"/>
<dbReference type="Proteomes" id="UP000006701">
    <property type="component" value="Unassembled WGS sequence"/>
</dbReference>
<dbReference type="GO" id="GO:0005576">
    <property type="term" value="C:extracellular region"/>
    <property type="evidence" value="ECO:0007669"/>
    <property type="project" value="UniProtKB-SubCell"/>
</dbReference>
<dbReference type="GO" id="GO:0004177">
    <property type="term" value="F:aminopeptidase activity"/>
    <property type="evidence" value="ECO:0007669"/>
    <property type="project" value="UniProtKB-KW"/>
</dbReference>
<dbReference type="GO" id="GO:0046872">
    <property type="term" value="F:metal ion binding"/>
    <property type="evidence" value="ECO:0007669"/>
    <property type="project" value="UniProtKB-KW"/>
</dbReference>
<dbReference type="GO" id="GO:0008235">
    <property type="term" value="F:metalloexopeptidase activity"/>
    <property type="evidence" value="ECO:0007669"/>
    <property type="project" value="InterPro"/>
</dbReference>
<dbReference type="GO" id="GO:0006508">
    <property type="term" value="P:proteolysis"/>
    <property type="evidence" value="ECO:0007669"/>
    <property type="project" value="UniProtKB-KW"/>
</dbReference>
<dbReference type="CDD" id="cd03879">
    <property type="entry name" value="M28_AAP"/>
    <property type="match status" value="1"/>
</dbReference>
<dbReference type="FunFam" id="3.40.630.10:FF:000042">
    <property type="entry name" value="Peptide hydrolase"/>
    <property type="match status" value="1"/>
</dbReference>
<dbReference type="Gene3D" id="3.40.630.10">
    <property type="entry name" value="Zn peptidases"/>
    <property type="match status" value="1"/>
</dbReference>
<dbReference type="InterPro" id="IPR045175">
    <property type="entry name" value="M28_fam"/>
</dbReference>
<dbReference type="InterPro" id="IPR007484">
    <property type="entry name" value="Peptidase_M28"/>
</dbReference>
<dbReference type="PANTHER" id="PTHR12147:SF56">
    <property type="entry name" value="AMINOPEPTIDASE YDR415C-RELATED"/>
    <property type="match status" value="1"/>
</dbReference>
<dbReference type="PANTHER" id="PTHR12147">
    <property type="entry name" value="METALLOPEPTIDASE M28 FAMILY MEMBER"/>
    <property type="match status" value="1"/>
</dbReference>
<dbReference type="Pfam" id="PF04389">
    <property type="entry name" value="Peptidase_M28"/>
    <property type="match status" value="1"/>
</dbReference>
<dbReference type="SUPFAM" id="SSF53187">
    <property type="entry name" value="Zn-dependent exopeptidases"/>
    <property type="match status" value="1"/>
</dbReference>
<sequence length="388" mass="42675">MRVLAAIALGATGLRGALAAVVPQEVLGTNPHIHHEQEKYLIELAPYQTRWVTEEEKWALKLDGVNFIDITEEHNTGFYPTLNSASYVKYPLKMQYADEVVALNKNLSTANMKANLEHFTSFHTRYYKSQTGIESATWLASQVEKVITESGAANHGATVERFAHPWGQFSIIARIPGQTNKTVVLGAHQDSINLFLPSILAAPGADDDGSGTVTILEALRGLLQSGSVAQGNATNTIEFHWYSAEEGGMLGSQAVFSSYKKNRREVKAMLQQDMTGYTKGALDAGAKEAVGIMIDYVDQGLTRFVKEIVTTYCSLGYVETKCGYACSDHTSASKYGYPAAMATESEMENTNRKIHTTDDQIKYLSFDHMLEHAKLTLGFAYELAFAPF</sequence>
<name>LAP1_ASPCL</name>
<feature type="signal peptide" evidence="2">
    <location>
        <begin position="1"/>
        <end position="19"/>
    </location>
</feature>
<feature type="propeptide" id="PRO_0000412388" evidence="1">
    <location>
        <begin position="20"/>
        <end position="88"/>
    </location>
</feature>
<feature type="chain" id="PRO_0000412389" description="Leucine aminopeptidase 1">
    <location>
        <begin position="89"/>
        <end position="388"/>
    </location>
</feature>
<feature type="binding site" evidence="1">
    <location>
        <position position="188"/>
    </location>
    <ligand>
        <name>Zn(2+)</name>
        <dbReference type="ChEBI" id="CHEBI:29105"/>
        <label>1</label>
    </ligand>
</feature>
<feature type="binding site" evidence="1">
    <location>
        <position position="207"/>
    </location>
    <ligand>
        <name>Zn(2+)</name>
        <dbReference type="ChEBI" id="CHEBI:29105"/>
        <label>1</label>
    </ligand>
</feature>
<feature type="binding site" evidence="1">
    <location>
        <position position="207"/>
    </location>
    <ligand>
        <name>Zn(2+)</name>
        <dbReference type="ChEBI" id="CHEBI:29105"/>
        <label>2</label>
        <note>catalytic</note>
    </ligand>
</feature>
<feature type="binding site" evidence="1">
    <location>
        <position position="246"/>
    </location>
    <ligand>
        <name>Zn(2+)</name>
        <dbReference type="ChEBI" id="CHEBI:29105"/>
        <label>2</label>
        <note>catalytic</note>
    </ligand>
</feature>
<feature type="binding site" evidence="1">
    <location>
        <position position="273"/>
    </location>
    <ligand>
        <name>Zn(2+)</name>
        <dbReference type="ChEBI" id="CHEBI:29105"/>
        <label>1</label>
    </ligand>
</feature>
<feature type="binding site" evidence="1">
    <location>
        <position position="355"/>
    </location>
    <ligand>
        <name>Zn(2+)</name>
        <dbReference type="ChEBI" id="CHEBI:29105"/>
        <label>2</label>
        <note>catalytic</note>
    </ligand>
</feature>
<feature type="glycosylation site" description="N-linked (GlcNAc...) asparagine" evidence="2">
    <location>
        <position position="106"/>
    </location>
</feature>
<feature type="glycosylation site" description="N-linked (GlcNAc...) asparagine" evidence="2">
    <location>
        <position position="180"/>
    </location>
</feature>
<feature type="glycosylation site" description="N-linked (GlcNAc...) asparagine" evidence="2">
    <location>
        <position position="232"/>
    </location>
</feature>
<feature type="disulfide bond" evidence="1">
    <location>
        <begin position="322"/>
        <end position="326"/>
    </location>
</feature>
<proteinExistence type="inferred from homology"/>